<comment type="function">
    <text>Potential odorant receptor.</text>
</comment>
<comment type="subcellular location">
    <subcellularLocation>
        <location evidence="3">Cell membrane</location>
        <topology evidence="1">Multi-pass membrane protein</topology>
    </subcellularLocation>
</comment>
<comment type="similarity">
    <text evidence="2">Belongs to the G-protein coupled receptor 1 family.</text>
</comment>
<organism>
    <name type="scientific">Mus musculus</name>
    <name type="common">Mouse</name>
    <dbReference type="NCBI Taxonomy" id="10090"/>
    <lineage>
        <taxon>Eukaryota</taxon>
        <taxon>Metazoa</taxon>
        <taxon>Chordata</taxon>
        <taxon>Craniata</taxon>
        <taxon>Vertebrata</taxon>
        <taxon>Euteleostomi</taxon>
        <taxon>Mammalia</taxon>
        <taxon>Eutheria</taxon>
        <taxon>Euarchontoglires</taxon>
        <taxon>Glires</taxon>
        <taxon>Rodentia</taxon>
        <taxon>Myomorpha</taxon>
        <taxon>Muroidea</taxon>
        <taxon>Muridae</taxon>
        <taxon>Murinae</taxon>
        <taxon>Mus</taxon>
        <taxon>Mus</taxon>
    </lineage>
</organism>
<gene>
    <name evidence="4" type="primary">Or5p66</name>
    <name evidence="4" type="synonym">Mor204-17</name>
    <name evidence="4" type="synonym">Olfr490</name>
</gene>
<name>O5P66_MOUSE</name>
<proteinExistence type="inferred from homology"/>
<reference key="1">
    <citation type="journal article" date="2002" name="Nat. Neurosci.">
        <title>The olfactory receptor gene superfamily of the mouse.</title>
        <authorList>
            <person name="Zhang X."/>
            <person name="Firestein S."/>
        </authorList>
    </citation>
    <scope>NUCLEOTIDE SEQUENCE [GENOMIC DNA]</scope>
</reference>
<reference key="2">
    <citation type="journal article" date="2002" name="Hum. Mol. Genet.">
        <title>Different evolutionary processes shaped the mouse and human olfactory receptor gene families.</title>
        <authorList>
            <person name="Young J.M."/>
            <person name="Friedman C."/>
            <person name="Williams E.M."/>
            <person name="Ross J.A."/>
            <person name="Tonnes-Priddy L."/>
            <person name="Trask B.J."/>
        </authorList>
    </citation>
    <scope>NUCLEOTIDE SEQUENCE [GENOMIC DNA]</scope>
</reference>
<reference key="3">
    <citation type="journal article" date="2002" name="Hum. Mol. Genet.">
        <authorList>
            <person name="Young J.M."/>
            <person name="Friedman C."/>
            <person name="Williams E.M."/>
            <person name="Ross J.A."/>
            <person name="Tonnes-Priddy L."/>
            <person name="Trask B.J."/>
        </authorList>
    </citation>
    <scope>ERRATUM OF PUBMED:11875048</scope>
</reference>
<accession>Q8VFD2</accession>
<protein>
    <recommendedName>
        <fullName evidence="3">Olfactory receptor 5P66</fullName>
    </recommendedName>
    <alternativeName>
        <fullName>Olfactory receptor 204-17</fullName>
    </alternativeName>
    <alternativeName>
        <fullName>Olfactory receptor 490</fullName>
    </alternativeName>
</protein>
<sequence>MAFLENGNHTAVSEFILLGLTDDPVLRIVLFTIILCIYLVTVSGNLSTILLIRVSSQLHHPMYFFLSHLASADIGLSSSVTPNMLVNFLVERSTISYLGCGIQLSSAALFGATECFLLAAMAYDRFMAICNPLLYSTKMSTKVCVQLIVGSYIAGFLNASSFLLSFFSLLFCGQNIINDFFCDFAPLAELSCSDVSVFVVVISFSAGTVTMLTVFVIAISYSYILITILKMRSTEGRQKAFSTCTSHLTAVTLFYGTVTFIYVMPKSSYSMDQNKIISVFYMVVVPMLNPLIYSLRNNEIKGALKRHFDRKTFS</sequence>
<evidence type="ECO:0000255" key="1"/>
<evidence type="ECO:0000255" key="2">
    <source>
        <dbReference type="PROSITE-ProRule" id="PRU00521"/>
    </source>
</evidence>
<evidence type="ECO:0000305" key="3"/>
<evidence type="ECO:0000312" key="4">
    <source>
        <dbReference type="MGI" id="MGI:3030324"/>
    </source>
</evidence>
<keyword id="KW-1003">Cell membrane</keyword>
<keyword id="KW-1015">Disulfide bond</keyword>
<keyword id="KW-0297">G-protein coupled receptor</keyword>
<keyword id="KW-0325">Glycoprotein</keyword>
<keyword id="KW-0472">Membrane</keyword>
<keyword id="KW-0552">Olfaction</keyword>
<keyword id="KW-0675">Receptor</keyword>
<keyword id="KW-1185">Reference proteome</keyword>
<keyword id="KW-0716">Sensory transduction</keyword>
<keyword id="KW-0807">Transducer</keyword>
<keyword id="KW-0812">Transmembrane</keyword>
<keyword id="KW-1133">Transmembrane helix</keyword>
<dbReference type="EMBL" id="AY073599">
    <property type="protein sequence ID" value="AAL61262.1"/>
    <property type="molecule type" value="Genomic_DNA"/>
</dbReference>
<dbReference type="EMBL" id="AY317598">
    <property type="protein sequence ID" value="AAP70993.1"/>
    <property type="molecule type" value="Genomic_DNA"/>
</dbReference>
<dbReference type="CCDS" id="CCDS21710.1"/>
<dbReference type="RefSeq" id="NP_666709.1">
    <property type="nucleotide sequence ID" value="NM_146498.1"/>
</dbReference>
<dbReference type="SMR" id="Q8VFD2"/>
<dbReference type="FunCoup" id="Q8VFD2">
    <property type="interactions" value="1129"/>
</dbReference>
<dbReference type="STRING" id="10090.ENSMUSP00000147922"/>
<dbReference type="GlyCosmos" id="Q8VFD2">
    <property type="glycosylation" value="1 site, No reported glycans"/>
</dbReference>
<dbReference type="GlyGen" id="Q8VFD2">
    <property type="glycosylation" value="1 site"/>
</dbReference>
<dbReference type="PaxDb" id="10090-ENSMUSP00000074137"/>
<dbReference type="DNASU" id="258491"/>
<dbReference type="Ensembl" id="ENSMUST00000210114.3">
    <property type="protein sequence ID" value="ENSMUSP00000147513.2"/>
    <property type="gene ID" value="ENSMUSG00000109884.4"/>
</dbReference>
<dbReference type="Ensembl" id="ENSMUST00000211345.3">
    <property type="protein sequence ID" value="ENSMUSP00000147922.3"/>
    <property type="gene ID" value="ENSMUSG00000109884.4"/>
</dbReference>
<dbReference type="GeneID" id="258491"/>
<dbReference type="KEGG" id="mmu:258491"/>
<dbReference type="UCSC" id="uc009jce.1">
    <property type="organism name" value="mouse"/>
</dbReference>
<dbReference type="AGR" id="MGI:3030324"/>
<dbReference type="CTD" id="258491"/>
<dbReference type="MGI" id="MGI:3030324">
    <property type="gene designation" value="Or5p66"/>
</dbReference>
<dbReference type="VEuPathDB" id="HostDB:ENSMUSG00000109884"/>
<dbReference type="eggNOG" id="ENOG502SKA1">
    <property type="taxonomic scope" value="Eukaryota"/>
</dbReference>
<dbReference type="GeneTree" id="ENSGT01130000278279"/>
<dbReference type="HOGENOM" id="CLU_012526_1_0_1"/>
<dbReference type="InParanoid" id="Q8VFD2"/>
<dbReference type="OMA" id="RIMIFKR"/>
<dbReference type="OrthoDB" id="9608359at2759"/>
<dbReference type="PhylomeDB" id="Q8VFD2"/>
<dbReference type="TreeFam" id="TF338848"/>
<dbReference type="BioGRID-ORCS" id="258491">
    <property type="hits" value="4 hits in 40 CRISPR screens"/>
</dbReference>
<dbReference type="PRO" id="PR:Q8VFD2"/>
<dbReference type="Proteomes" id="UP000000589">
    <property type="component" value="Chromosome 7"/>
</dbReference>
<dbReference type="RNAct" id="Q8VFD2">
    <property type="molecule type" value="protein"/>
</dbReference>
<dbReference type="GO" id="GO:0016020">
    <property type="term" value="C:membrane"/>
    <property type="evidence" value="ECO:0000247"/>
    <property type="project" value="MGI"/>
</dbReference>
<dbReference type="GO" id="GO:0005886">
    <property type="term" value="C:plasma membrane"/>
    <property type="evidence" value="ECO:0007669"/>
    <property type="project" value="UniProtKB-SubCell"/>
</dbReference>
<dbReference type="GO" id="GO:0004930">
    <property type="term" value="F:G protein-coupled receptor activity"/>
    <property type="evidence" value="ECO:0007669"/>
    <property type="project" value="UniProtKB-KW"/>
</dbReference>
<dbReference type="GO" id="GO:0004984">
    <property type="term" value="F:olfactory receptor activity"/>
    <property type="evidence" value="ECO:0000247"/>
    <property type="project" value="MGI"/>
</dbReference>
<dbReference type="GO" id="GO:0007186">
    <property type="term" value="P:G protein-coupled receptor signaling pathway"/>
    <property type="evidence" value="ECO:0000247"/>
    <property type="project" value="MGI"/>
</dbReference>
<dbReference type="GO" id="GO:0007608">
    <property type="term" value="P:sensory perception of smell"/>
    <property type="evidence" value="ECO:0000247"/>
    <property type="project" value="MGI"/>
</dbReference>
<dbReference type="FunFam" id="1.20.1070.10:FF:000004">
    <property type="entry name" value="Olfactory receptor"/>
    <property type="match status" value="1"/>
</dbReference>
<dbReference type="Gene3D" id="1.20.1070.10">
    <property type="entry name" value="Rhodopsin 7-helix transmembrane proteins"/>
    <property type="match status" value="1"/>
</dbReference>
<dbReference type="InterPro" id="IPR000276">
    <property type="entry name" value="GPCR_Rhodpsn"/>
</dbReference>
<dbReference type="InterPro" id="IPR017452">
    <property type="entry name" value="GPCR_Rhodpsn_7TM"/>
</dbReference>
<dbReference type="InterPro" id="IPR000725">
    <property type="entry name" value="Olfact_rcpt"/>
</dbReference>
<dbReference type="PANTHER" id="PTHR48018">
    <property type="entry name" value="OLFACTORY RECEPTOR"/>
    <property type="match status" value="1"/>
</dbReference>
<dbReference type="Pfam" id="PF13853">
    <property type="entry name" value="7tm_4"/>
    <property type="match status" value="1"/>
</dbReference>
<dbReference type="PRINTS" id="PR00237">
    <property type="entry name" value="GPCRRHODOPSN"/>
</dbReference>
<dbReference type="PRINTS" id="PR00245">
    <property type="entry name" value="OLFACTORYR"/>
</dbReference>
<dbReference type="SUPFAM" id="SSF81321">
    <property type="entry name" value="Family A G protein-coupled receptor-like"/>
    <property type="match status" value="1"/>
</dbReference>
<dbReference type="PROSITE" id="PS00237">
    <property type="entry name" value="G_PROTEIN_RECEP_F1_1"/>
    <property type="match status" value="1"/>
</dbReference>
<dbReference type="PROSITE" id="PS50262">
    <property type="entry name" value="G_PROTEIN_RECEP_F1_2"/>
    <property type="match status" value="1"/>
</dbReference>
<feature type="chain" id="PRO_0000150845" description="Olfactory receptor 5P66">
    <location>
        <begin position="1"/>
        <end position="314"/>
    </location>
</feature>
<feature type="topological domain" description="Extracellular" evidence="1">
    <location>
        <begin position="1"/>
        <end position="28"/>
    </location>
</feature>
<feature type="transmembrane region" description="Helical; Name=1" evidence="1">
    <location>
        <begin position="29"/>
        <end position="49"/>
    </location>
</feature>
<feature type="topological domain" description="Cytoplasmic" evidence="1">
    <location>
        <begin position="50"/>
        <end position="57"/>
    </location>
</feature>
<feature type="transmembrane region" description="Helical; Name=2" evidence="1">
    <location>
        <begin position="58"/>
        <end position="78"/>
    </location>
</feature>
<feature type="topological domain" description="Extracellular" evidence="1">
    <location>
        <begin position="79"/>
        <end position="102"/>
    </location>
</feature>
<feature type="transmembrane region" description="Helical; Name=3" evidence="1">
    <location>
        <begin position="103"/>
        <end position="123"/>
    </location>
</feature>
<feature type="topological domain" description="Cytoplasmic" evidence="1">
    <location>
        <begin position="124"/>
        <end position="136"/>
    </location>
</feature>
<feature type="transmembrane region" description="Helical; Name=4" evidence="1">
    <location>
        <begin position="137"/>
        <end position="157"/>
    </location>
</feature>
<feature type="topological domain" description="Extracellular" evidence="1">
    <location>
        <begin position="158"/>
        <end position="199"/>
    </location>
</feature>
<feature type="transmembrane region" description="Helical; Name=5" evidence="1">
    <location>
        <begin position="200"/>
        <end position="220"/>
    </location>
</feature>
<feature type="topological domain" description="Cytoplasmic" evidence="1">
    <location>
        <begin position="221"/>
        <end position="240"/>
    </location>
</feature>
<feature type="transmembrane region" description="Helical; Name=6" evidence="1">
    <location>
        <begin position="241"/>
        <end position="261"/>
    </location>
</feature>
<feature type="topological domain" description="Extracellular" evidence="1">
    <location>
        <begin position="262"/>
        <end position="274"/>
    </location>
</feature>
<feature type="transmembrane region" description="Helical; Name=7" evidence="1">
    <location>
        <begin position="275"/>
        <end position="295"/>
    </location>
</feature>
<feature type="topological domain" description="Cytoplasmic" evidence="1">
    <location>
        <begin position="296"/>
        <end position="314"/>
    </location>
</feature>
<feature type="glycosylation site" description="N-linked (GlcNAc...) asparagine" evidence="1">
    <location>
        <position position="8"/>
    </location>
</feature>
<feature type="disulfide bond" evidence="2">
    <location>
        <begin position="100"/>
        <end position="192"/>
    </location>
</feature>